<proteinExistence type="inferred from homology"/>
<reference key="1">
    <citation type="journal article" date="2008" name="Plant J.">
        <title>Functional gene-mining for salt-tolerance genes with the power of Arabidopsis.</title>
        <authorList>
            <person name="Du J."/>
            <person name="Huang Y.P."/>
            <person name="Xi J."/>
            <person name="Cao M.J."/>
            <person name="Ni W.S."/>
            <person name="Chen X."/>
            <person name="Zhu J.K."/>
            <person name="Oliver D.J."/>
            <person name="Xiang C.B."/>
        </authorList>
    </citation>
    <scope>NUCLEOTIDE SEQUENCE [LARGE SCALE MRNA]</scope>
</reference>
<accession>B4YYA9</accession>
<evidence type="ECO:0000250" key="1">
    <source>
        <dbReference type="UniProtKB" id="Q8LBN7"/>
    </source>
</evidence>
<evidence type="ECO:0000305" key="2"/>
<feature type="chain" id="PRO_0000365548" description="Costars family protein ST45-2">
    <location>
        <begin position="1"/>
        <end position="92"/>
    </location>
</feature>
<feature type="modified residue" description="N-acetylmethionine" evidence="1">
    <location>
        <position position="1"/>
    </location>
</feature>
<dbReference type="EMBL" id="EU714072">
    <property type="protein sequence ID" value="ACF23026.1"/>
    <property type="molecule type" value="mRNA"/>
</dbReference>
<dbReference type="SMR" id="B4YYA9"/>
<dbReference type="GO" id="GO:0032970">
    <property type="term" value="P:regulation of actin filament-based process"/>
    <property type="evidence" value="ECO:0007669"/>
    <property type="project" value="TreeGrafter"/>
</dbReference>
<dbReference type="FunFam" id="1.10.10.1540:FF:000002">
    <property type="entry name" value="costars family protein ABRACL"/>
    <property type="match status" value="1"/>
</dbReference>
<dbReference type="Gene3D" id="1.10.10.1540">
    <property type="entry name" value="Costar domain"/>
    <property type="match status" value="1"/>
</dbReference>
<dbReference type="InterPro" id="IPR044302">
    <property type="entry name" value="Costars"/>
</dbReference>
<dbReference type="InterPro" id="IPR027817">
    <property type="entry name" value="Costars_dom"/>
</dbReference>
<dbReference type="InterPro" id="IPR038095">
    <property type="entry name" value="Costars_sf"/>
</dbReference>
<dbReference type="PANTHER" id="PTHR46334">
    <property type="entry name" value="COSTARS FAMILY PROTEIN ABRACL"/>
    <property type="match status" value="1"/>
</dbReference>
<dbReference type="PANTHER" id="PTHR46334:SF3">
    <property type="entry name" value="COSTARS FAMILY PROTEIN-LIKE"/>
    <property type="match status" value="1"/>
</dbReference>
<dbReference type="Pfam" id="PF14705">
    <property type="entry name" value="Costars"/>
    <property type="match status" value="1"/>
</dbReference>
<dbReference type="SMART" id="SM01283">
    <property type="entry name" value="Costars"/>
    <property type="match status" value="1"/>
</dbReference>
<protein>
    <recommendedName>
        <fullName>Costars family protein ST45-2</fullName>
    </recommendedName>
</protein>
<sequence>MNVEEEIQKLEEEIHRLGSLQSDGSYKVTFGVLFNDDRCANIFEALVGTLRAAKKRKIVAFPGELLLQGVHDKVEITLRPPPPPPQAVAATS</sequence>
<keyword id="KW-0007">Acetylation</keyword>
<comment type="similarity">
    <text evidence="2">Belongs to the costars family.</text>
</comment>
<name>COSA_EUTHA</name>
<organism>
    <name type="scientific">Eutrema halophilum</name>
    <name type="common">Salt cress</name>
    <name type="synonym">Sisymbrium halophilum</name>
    <dbReference type="NCBI Taxonomy" id="98038"/>
    <lineage>
        <taxon>Eukaryota</taxon>
        <taxon>Viridiplantae</taxon>
        <taxon>Streptophyta</taxon>
        <taxon>Embryophyta</taxon>
        <taxon>Tracheophyta</taxon>
        <taxon>Spermatophyta</taxon>
        <taxon>Magnoliopsida</taxon>
        <taxon>eudicotyledons</taxon>
        <taxon>Gunneridae</taxon>
        <taxon>Pentapetalae</taxon>
        <taxon>rosids</taxon>
        <taxon>malvids</taxon>
        <taxon>Brassicales</taxon>
        <taxon>Brassicaceae</taxon>
        <taxon>Eutremeae</taxon>
        <taxon>Eutrema</taxon>
    </lineage>
</organism>